<reference key="1">
    <citation type="journal article" date="2008" name="Genome Biol.">
        <title>The complete genome, comparative and functional analysis of Stenotrophomonas maltophilia reveals an organism heavily shielded by drug resistance determinants.</title>
        <authorList>
            <person name="Crossman L.C."/>
            <person name="Gould V.C."/>
            <person name="Dow J.M."/>
            <person name="Vernikos G.S."/>
            <person name="Okazaki A."/>
            <person name="Sebaihia M."/>
            <person name="Saunders D."/>
            <person name="Arrowsmith C."/>
            <person name="Carver T."/>
            <person name="Peters N."/>
            <person name="Adlem E."/>
            <person name="Kerhornou A."/>
            <person name="Lord A."/>
            <person name="Murphy L."/>
            <person name="Seeger K."/>
            <person name="Squares R."/>
            <person name="Rutter S."/>
            <person name="Quail M.A."/>
            <person name="Rajandream M.A."/>
            <person name="Harris D."/>
            <person name="Churcher C."/>
            <person name="Bentley S.D."/>
            <person name="Parkhill J."/>
            <person name="Thomson N.R."/>
            <person name="Avison M.B."/>
        </authorList>
    </citation>
    <scope>NUCLEOTIDE SEQUENCE [LARGE SCALE GENOMIC DNA]</scope>
    <source>
        <strain>K279a</strain>
    </source>
</reference>
<keyword id="KW-0548">Nucleotidyltransferase</keyword>
<keyword id="KW-1185">Reference proteome</keyword>
<keyword id="KW-0694">RNA-binding</keyword>
<keyword id="KW-0698">rRNA processing</keyword>
<keyword id="KW-0808">Transferase</keyword>
<keyword id="KW-0819">tRNA processing</keyword>
<keyword id="KW-0820">tRNA-binding</keyword>
<proteinExistence type="inferred from homology"/>
<accession>B2FT17</accession>
<name>RNPH_STRMK</name>
<comment type="function">
    <text evidence="1">Phosphorolytic 3'-5' exoribonuclease that plays an important role in tRNA 3'-end maturation. Removes nucleotide residues following the 3'-CCA terminus of tRNAs; can also add nucleotides to the ends of RNA molecules by using nucleoside diphosphates as substrates, but this may not be physiologically important. Probably plays a role in initiation of 16S rRNA degradation (leading to ribosome degradation) during starvation.</text>
</comment>
<comment type="catalytic activity">
    <reaction evidence="1">
        <text>tRNA(n+1) + phosphate = tRNA(n) + a ribonucleoside 5'-diphosphate</text>
        <dbReference type="Rhea" id="RHEA:10628"/>
        <dbReference type="Rhea" id="RHEA-COMP:17343"/>
        <dbReference type="Rhea" id="RHEA-COMP:17344"/>
        <dbReference type="ChEBI" id="CHEBI:43474"/>
        <dbReference type="ChEBI" id="CHEBI:57930"/>
        <dbReference type="ChEBI" id="CHEBI:173114"/>
        <dbReference type="EC" id="2.7.7.56"/>
    </reaction>
</comment>
<comment type="subunit">
    <text evidence="1">Homohexameric ring arranged as a trimer of dimers.</text>
</comment>
<comment type="similarity">
    <text evidence="1">Belongs to the RNase PH family.</text>
</comment>
<dbReference type="EC" id="2.7.7.56" evidence="1"/>
<dbReference type="EMBL" id="AM743169">
    <property type="protein sequence ID" value="CAQ47259.1"/>
    <property type="molecule type" value="Genomic_DNA"/>
</dbReference>
<dbReference type="RefSeq" id="WP_005410889.1">
    <property type="nucleotide sequence ID" value="NC_010943.1"/>
</dbReference>
<dbReference type="SMR" id="B2FT17"/>
<dbReference type="EnsemblBacteria" id="CAQ47259">
    <property type="protein sequence ID" value="CAQ47259"/>
    <property type="gene ID" value="Smlt3855"/>
</dbReference>
<dbReference type="GeneID" id="93834839"/>
<dbReference type="KEGG" id="sml:Smlt3855"/>
<dbReference type="eggNOG" id="COG0689">
    <property type="taxonomic scope" value="Bacteria"/>
</dbReference>
<dbReference type="HOGENOM" id="CLU_050858_0_0_6"/>
<dbReference type="Proteomes" id="UP000008840">
    <property type="component" value="Chromosome"/>
</dbReference>
<dbReference type="GO" id="GO:0000175">
    <property type="term" value="F:3'-5'-RNA exonuclease activity"/>
    <property type="evidence" value="ECO:0007669"/>
    <property type="project" value="UniProtKB-UniRule"/>
</dbReference>
<dbReference type="GO" id="GO:0000049">
    <property type="term" value="F:tRNA binding"/>
    <property type="evidence" value="ECO:0007669"/>
    <property type="project" value="UniProtKB-UniRule"/>
</dbReference>
<dbReference type="GO" id="GO:0009022">
    <property type="term" value="F:tRNA nucleotidyltransferase activity"/>
    <property type="evidence" value="ECO:0007669"/>
    <property type="project" value="UniProtKB-UniRule"/>
</dbReference>
<dbReference type="GO" id="GO:0016075">
    <property type="term" value="P:rRNA catabolic process"/>
    <property type="evidence" value="ECO:0007669"/>
    <property type="project" value="UniProtKB-UniRule"/>
</dbReference>
<dbReference type="GO" id="GO:0006364">
    <property type="term" value="P:rRNA processing"/>
    <property type="evidence" value="ECO:0007669"/>
    <property type="project" value="UniProtKB-KW"/>
</dbReference>
<dbReference type="GO" id="GO:0008033">
    <property type="term" value="P:tRNA processing"/>
    <property type="evidence" value="ECO:0007669"/>
    <property type="project" value="UniProtKB-UniRule"/>
</dbReference>
<dbReference type="CDD" id="cd11362">
    <property type="entry name" value="RNase_PH_bact"/>
    <property type="match status" value="1"/>
</dbReference>
<dbReference type="FunFam" id="3.30.230.70:FF:000003">
    <property type="entry name" value="Ribonuclease PH"/>
    <property type="match status" value="1"/>
</dbReference>
<dbReference type="Gene3D" id="3.30.230.70">
    <property type="entry name" value="GHMP Kinase, N-terminal domain"/>
    <property type="match status" value="1"/>
</dbReference>
<dbReference type="HAMAP" id="MF_00564">
    <property type="entry name" value="RNase_PH"/>
    <property type="match status" value="1"/>
</dbReference>
<dbReference type="InterPro" id="IPR001247">
    <property type="entry name" value="ExoRNase_PH_dom1"/>
</dbReference>
<dbReference type="InterPro" id="IPR015847">
    <property type="entry name" value="ExoRNase_PH_dom2"/>
</dbReference>
<dbReference type="InterPro" id="IPR036345">
    <property type="entry name" value="ExoRNase_PH_dom2_sf"/>
</dbReference>
<dbReference type="InterPro" id="IPR027408">
    <property type="entry name" value="PNPase/RNase_PH_dom_sf"/>
</dbReference>
<dbReference type="InterPro" id="IPR020568">
    <property type="entry name" value="Ribosomal_Su5_D2-typ_SF"/>
</dbReference>
<dbReference type="InterPro" id="IPR050080">
    <property type="entry name" value="RNase_PH"/>
</dbReference>
<dbReference type="InterPro" id="IPR002381">
    <property type="entry name" value="RNase_PH_bac-type"/>
</dbReference>
<dbReference type="InterPro" id="IPR018336">
    <property type="entry name" value="RNase_PH_CS"/>
</dbReference>
<dbReference type="NCBIfam" id="TIGR01966">
    <property type="entry name" value="RNasePH"/>
    <property type="match status" value="1"/>
</dbReference>
<dbReference type="PANTHER" id="PTHR11953">
    <property type="entry name" value="EXOSOME COMPLEX COMPONENT"/>
    <property type="match status" value="1"/>
</dbReference>
<dbReference type="PANTHER" id="PTHR11953:SF0">
    <property type="entry name" value="EXOSOME COMPLEX COMPONENT RRP41"/>
    <property type="match status" value="1"/>
</dbReference>
<dbReference type="Pfam" id="PF01138">
    <property type="entry name" value="RNase_PH"/>
    <property type="match status" value="1"/>
</dbReference>
<dbReference type="Pfam" id="PF03725">
    <property type="entry name" value="RNase_PH_C"/>
    <property type="match status" value="1"/>
</dbReference>
<dbReference type="SUPFAM" id="SSF55666">
    <property type="entry name" value="Ribonuclease PH domain 2-like"/>
    <property type="match status" value="1"/>
</dbReference>
<dbReference type="SUPFAM" id="SSF54211">
    <property type="entry name" value="Ribosomal protein S5 domain 2-like"/>
    <property type="match status" value="1"/>
</dbReference>
<dbReference type="PROSITE" id="PS01277">
    <property type="entry name" value="RIBONUCLEASE_PH"/>
    <property type="match status" value="1"/>
</dbReference>
<evidence type="ECO:0000255" key="1">
    <source>
        <dbReference type="HAMAP-Rule" id="MF_00564"/>
    </source>
</evidence>
<sequence length="241" mass="25725">MSDSRPSGRQPDQLRPVVIQRGFTRHAEGSVLVCFGETRVLCTASVENRVPGFLRGKGEGWVTAEYGMLPRATHTRSDREAARGKQGGRTLEIQRLIGRSLRACVDRNALGERTITLDCDVLQADGGTRTAAITGAYVALVDAVNVLMKRGDIKRNPILGAVAAVSVGVYRGTPVLDLDYAEDSDCDTDMNVVMNDGGGFIELQGTAEGHAFRRDELDALLGLAEKGVGELLAAQQAALSA</sequence>
<feature type="chain" id="PRO_1000129378" description="Ribonuclease PH">
    <location>
        <begin position="1"/>
        <end position="241"/>
    </location>
</feature>
<feature type="binding site" evidence="1">
    <location>
        <position position="89"/>
    </location>
    <ligand>
        <name>phosphate</name>
        <dbReference type="ChEBI" id="CHEBI:43474"/>
        <note>substrate</note>
    </ligand>
</feature>
<feature type="binding site" evidence="1">
    <location>
        <begin position="127"/>
        <end position="129"/>
    </location>
    <ligand>
        <name>phosphate</name>
        <dbReference type="ChEBI" id="CHEBI:43474"/>
        <note>substrate</note>
    </ligand>
</feature>
<protein>
    <recommendedName>
        <fullName evidence="1">Ribonuclease PH</fullName>
        <shortName evidence="1">RNase PH</shortName>
        <ecNumber evidence="1">2.7.7.56</ecNumber>
    </recommendedName>
    <alternativeName>
        <fullName evidence="1">tRNA nucleotidyltransferase</fullName>
    </alternativeName>
</protein>
<organism>
    <name type="scientific">Stenotrophomonas maltophilia (strain K279a)</name>
    <dbReference type="NCBI Taxonomy" id="522373"/>
    <lineage>
        <taxon>Bacteria</taxon>
        <taxon>Pseudomonadati</taxon>
        <taxon>Pseudomonadota</taxon>
        <taxon>Gammaproteobacteria</taxon>
        <taxon>Lysobacterales</taxon>
        <taxon>Lysobacteraceae</taxon>
        <taxon>Stenotrophomonas</taxon>
        <taxon>Stenotrophomonas maltophilia group</taxon>
    </lineage>
</organism>
<gene>
    <name evidence="1" type="primary">rph</name>
    <name type="ordered locus">Smlt3855</name>
</gene>